<organism>
    <name type="scientific">Mycolicibacterium smegmatis (strain ATCC 700084 / mc(2)155)</name>
    <name type="common">Mycobacterium smegmatis</name>
    <dbReference type="NCBI Taxonomy" id="246196"/>
    <lineage>
        <taxon>Bacteria</taxon>
        <taxon>Bacillati</taxon>
        <taxon>Actinomycetota</taxon>
        <taxon>Actinomycetes</taxon>
        <taxon>Mycobacteriales</taxon>
        <taxon>Mycobacteriaceae</taxon>
        <taxon>Mycolicibacterium</taxon>
    </lineage>
</organism>
<gene>
    <name type="primary">sigE</name>
    <name type="ordered locus">MSMEG_5072</name>
    <name type="ordered locus">MSMEI_4945</name>
</gene>
<evidence type="ECO:0000250" key="1"/>
<evidence type="ECO:0000255" key="2"/>
<evidence type="ECO:0000269" key="3">
    <source>
    </source>
</evidence>
<evidence type="ECO:0000269" key="4">
    <source>
    </source>
</evidence>
<evidence type="ECO:0000305" key="5"/>
<accession>A0R2D4</accession>
<accession>I7GEQ0</accession>
<accession>O05767</accession>
<feature type="chain" id="PRO_0000422946" description="ECF RNA polymerase sigma factor SigE">
    <location>
        <begin position="1"/>
        <end position="257"/>
    </location>
</feature>
<feature type="DNA-binding region" description="H-T-H motif" evidence="1">
    <location>
        <begin position="211"/>
        <end position="230"/>
    </location>
</feature>
<feature type="region of interest" description="Sigma-70 factor domain-2">
    <location>
        <begin position="87"/>
        <end position="153"/>
    </location>
</feature>
<feature type="region of interest" description="Sigma-70 factor domain-4">
    <location>
        <begin position="186"/>
        <end position="236"/>
    </location>
</feature>
<feature type="short sequence motif" description="Polymerase core binding" evidence="2">
    <location>
        <begin position="111"/>
        <end position="114"/>
    </location>
</feature>
<feature type="sequence conflict" description="In Ref. 1; AAC45221." evidence="5" ref="1">
    <original>S</original>
    <variation>P</variation>
    <location>
        <position position="41"/>
    </location>
</feature>
<proteinExistence type="evidence at protein level"/>
<dbReference type="EMBL" id="U87307">
    <property type="protein sequence ID" value="AAC45221.1"/>
    <property type="status" value="ALT_INIT"/>
    <property type="molecule type" value="Genomic_DNA"/>
</dbReference>
<dbReference type="EMBL" id="CP000480">
    <property type="protein sequence ID" value="ABK70433.1"/>
    <property type="molecule type" value="Genomic_DNA"/>
</dbReference>
<dbReference type="EMBL" id="CP001663">
    <property type="protein sequence ID" value="AFP41389.1"/>
    <property type="status" value="ALT_INIT"/>
    <property type="molecule type" value="Genomic_DNA"/>
</dbReference>
<dbReference type="RefSeq" id="WP_011730296.1">
    <property type="nucleotide sequence ID" value="NZ_SIJM01000019.1"/>
</dbReference>
<dbReference type="RefSeq" id="YP_889322.1">
    <property type="nucleotide sequence ID" value="NC_008596.1"/>
</dbReference>
<dbReference type="SMR" id="A0R2D4"/>
<dbReference type="STRING" id="246196.MSMEG_5072"/>
<dbReference type="PaxDb" id="246196-MSMEI_4945"/>
<dbReference type="GeneID" id="93459738"/>
<dbReference type="KEGG" id="msb:LJ00_25085"/>
<dbReference type="KEGG" id="msg:MSMEI_4945"/>
<dbReference type="KEGG" id="msm:MSMEG_5072"/>
<dbReference type="PATRIC" id="fig|246196.19.peg.4950"/>
<dbReference type="eggNOG" id="COG1595">
    <property type="taxonomic scope" value="Bacteria"/>
</dbReference>
<dbReference type="OrthoDB" id="9803470at2"/>
<dbReference type="Proteomes" id="UP000000757">
    <property type="component" value="Chromosome"/>
</dbReference>
<dbReference type="Proteomes" id="UP000006158">
    <property type="component" value="Chromosome"/>
</dbReference>
<dbReference type="GO" id="GO:0003677">
    <property type="term" value="F:DNA binding"/>
    <property type="evidence" value="ECO:0007669"/>
    <property type="project" value="UniProtKB-KW"/>
</dbReference>
<dbReference type="GO" id="GO:0016987">
    <property type="term" value="F:sigma factor activity"/>
    <property type="evidence" value="ECO:0007669"/>
    <property type="project" value="UniProtKB-KW"/>
</dbReference>
<dbReference type="GO" id="GO:0006352">
    <property type="term" value="P:DNA-templated transcription initiation"/>
    <property type="evidence" value="ECO:0007669"/>
    <property type="project" value="InterPro"/>
</dbReference>
<dbReference type="CDD" id="cd06171">
    <property type="entry name" value="Sigma70_r4"/>
    <property type="match status" value="1"/>
</dbReference>
<dbReference type="FunFam" id="1.10.10.10:FF:000068">
    <property type="entry name" value="RNA polymerase sigma factor"/>
    <property type="match status" value="1"/>
</dbReference>
<dbReference type="FunFam" id="1.10.1740.10:FF:000007">
    <property type="entry name" value="RNA polymerase sigma factor SigE"/>
    <property type="match status" value="1"/>
</dbReference>
<dbReference type="Gene3D" id="1.10.1740.10">
    <property type="match status" value="1"/>
</dbReference>
<dbReference type="Gene3D" id="1.10.10.10">
    <property type="entry name" value="Winged helix-like DNA-binding domain superfamily/Winged helix DNA-binding domain"/>
    <property type="match status" value="1"/>
</dbReference>
<dbReference type="InterPro" id="IPR039425">
    <property type="entry name" value="RNA_pol_sigma-70-like"/>
</dbReference>
<dbReference type="InterPro" id="IPR014284">
    <property type="entry name" value="RNA_pol_sigma-70_dom"/>
</dbReference>
<dbReference type="InterPro" id="IPR007627">
    <property type="entry name" value="RNA_pol_sigma70_r2"/>
</dbReference>
<dbReference type="InterPro" id="IPR013249">
    <property type="entry name" value="RNA_pol_sigma70_r4_t2"/>
</dbReference>
<dbReference type="InterPro" id="IPR013325">
    <property type="entry name" value="RNA_pol_sigma_r2"/>
</dbReference>
<dbReference type="InterPro" id="IPR013324">
    <property type="entry name" value="RNA_pol_sigma_r3/r4-like"/>
</dbReference>
<dbReference type="InterPro" id="IPR036388">
    <property type="entry name" value="WH-like_DNA-bd_sf"/>
</dbReference>
<dbReference type="NCBIfam" id="NF007229">
    <property type="entry name" value="PRK09647.1"/>
    <property type="match status" value="1"/>
</dbReference>
<dbReference type="NCBIfam" id="TIGR02937">
    <property type="entry name" value="sigma70-ECF"/>
    <property type="match status" value="1"/>
</dbReference>
<dbReference type="PANTHER" id="PTHR43133">
    <property type="entry name" value="RNA POLYMERASE ECF-TYPE SIGMA FACTO"/>
    <property type="match status" value="1"/>
</dbReference>
<dbReference type="PANTHER" id="PTHR43133:SF8">
    <property type="entry name" value="RNA POLYMERASE SIGMA FACTOR HI_1459-RELATED"/>
    <property type="match status" value="1"/>
</dbReference>
<dbReference type="Pfam" id="PF04542">
    <property type="entry name" value="Sigma70_r2"/>
    <property type="match status" value="1"/>
</dbReference>
<dbReference type="Pfam" id="PF08281">
    <property type="entry name" value="Sigma70_r4_2"/>
    <property type="match status" value="1"/>
</dbReference>
<dbReference type="SUPFAM" id="SSF88946">
    <property type="entry name" value="Sigma2 domain of RNA polymerase sigma factors"/>
    <property type="match status" value="1"/>
</dbReference>
<dbReference type="SUPFAM" id="SSF88659">
    <property type="entry name" value="Sigma3 and sigma4 domains of RNA polymerase sigma factors"/>
    <property type="match status" value="1"/>
</dbReference>
<comment type="function">
    <text evidence="1">Sigma factors are initiation factors that promote the attachment of RNA polymerase to specific initiation sites and are then released. Extracytoplasmic function (ECF) sigma factors are held in an inactive form by an anti-sigma factor until released (By similarity).</text>
</comment>
<comment type="subunit">
    <text evidence="3">Interacts transiently with the RNA polymerase catalytic core formed by RpoA, RpoB, RpoC and RpoZ (2 alpha, 1 beta, 1 beta' and 1 omega subunit) to form the RNA polymerase holoenzyme that can initiate transcription. Interacts (via sigma-70 factor domain 4) with RseA; interaction is abrogated by treatment of cells with H(2)O(2) or detergent.</text>
</comment>
<comment type="domain">
    <text evidence="1">The sigma-70 factor domain-2 mediates sequence-specific interaction with the -10 element in promoter DNA, and plays an important role in melting the double-stranded DNA and the formation of the transcription bubble. The sigma-70 factor domain-2 mediates interaction with the RNA polymerase subunits RpoB and RpoC (By similarity).</text>
</comment>
<comment type="domain">
    <text evidence="1">The sigma-70 factor domain-4 contains a helix-turn-helix (H-T-H) motif that mediates interaction with the -35 element in promoter DNA. The domain also mediates interaction with the RNA polymerase subunit RpoA. Interactions between sigma-70 factor domain-4 and anti-sigma factors prevents interaction of sigma factors with the RNA polymerase catalytic core (By similarity).</text>
</comment>
<comment type="disruption phenotype">
    <text evidence="4">Reduced survival after heat shock (50 degrees Celsius), treatment at pH 4.0, exposure to detergent and oxidative stress (5 mM H(2)O(2)). Additionally an inducible protective response to oxidative stress present in the wild type was absent in the mutant.</text>
</comment>
<comment type="similarity">
    <text evidence="5">Belongs to the sigma-70 factor family. ECF subfamily.</text>
</comment>
<comment type="sequence caution" evidence="5">
    <conflict type="erroneous initiation">
        <sequence resource="EMBL-CDS" id="AAC45221"/>
    </conflict>
    <text>Truncated N-terminus.</text>
</comment>
<comment type="sequence caution" evidence="5">
    <conflict type="erroneous initiation">
        <sequence resource="EMBL-CDS" id="AFP41389"/>
    </conflict>
    <text>Truncated N-terminus.</text>
</comment>
<reference key="1">
    <citation type="journal article" date="1997" name="J. Bacteriol.">
        <title>A mycobacterial extracytoplasmic function sigma factor involved in survival following stress.</title>
        <authorList>
            <person name="Wu Q.L."/>
            <person name="Kong D."/>
            <person name="Lam K."/>
            <person name="Husson R.N."/>
        </authorList>
    </citation>
    <scope>NUCLEOTIDE SEQUENCE [GENOMIC DNA]</scope>
    <scope>DISRUPTION PHENOTYPE</scope>
    <source>
        <strain>ATCC 700084 / mc(2)155</strain>
    </source>
</reference>
<reference key="2">
    <citation type="submission" date="2006-10" db="EMBL/GenBank/DDBJ databases">
        <authorList>
            <person name="Fleischmann R.D."/>
            <person name="Dodson R.J."/>
            <person name="Haft D.H."/>
            <person name="Merkel J.S."/>
            <person name="Nelson W.C."/>
            <person name="Fraser C.M."/>
        </authorList>
    </citation>
    <scope>NUCLEOTIDE SEQUENCE [LARGE SCALE GENOMIC DNA]</scope>
    <source>
        <strain>ATCC 700084 / mc(2)155</strain>
    </source>
</reference>
<reference key="3">
    <citation type="journal article" date="2007" name="Genome Biol.">
        <title>Interrupted coding sequences in Mycobacterium smegmatis: authentic mutations or sequencing errors?</title>
        <authorList>
            <person name="Deshayes C."/>
            <person name="Perrodou E."/>
            <person name="Gallien S."/>
            <person name="Euphrasie D."/>
            <person name="Schaeffer C."/>
            <person name="Van-Dorsselaer A."/>
            <person name="Poch O."/>
            <person name="Lecompte O."/>
            <person name="Reyrat J.-M."/>
        </authorList>
    </citation>
    <scope>NUCLEOTIDE SEQUENCE [LARGE SCALE GENOMIC DNA]</scope>
    <source>
        <strain>ATCC 700084 / mc(2)155</strain>
    </source>
</reference>
<reference key="4">
    <citation type="journal article" date="2009" name="Genome Res.">
        <title>Ortho-proteogenomics: multiple proteomes investigation through orthology and a new MS-based protocol.</title>
        <authorList>
            <person name="Gallien S."/>
            <person name="Perrodou E."/>
            <person name="Carapito C."/>
            <person name="Deshayes C."/>
            <person name="Reyrat J.-M."/>
            <person name="Van Dorsselaer A."/>
            <person name="Poch O."/>
            <person name="Schaeffer C."/>
            <person name="Lecompte O."/>
        </authorList>
    </citation>
    <scope>NUCLEOTIDE SEQUENCE [LARGE SCALE GENOMIC DNA]</scope>
    <source>
        <strain>ATCC 700084 / mc(2)155</strain>
    </source>
</reference>
<reference key="5">
    <citation type="journal article" date="2010" name="Mol. Microbiol.">
        <title>RseA, the SigE specific anti-sigma factor of Mycobacterium tuberculosis, is inactivated by phosphorylation-dependent ClpC1P2 proteolysis.</title>
        <authorList>
            <person name="Barik S."/>
            <person name="Sureka K."/>
            <person name="Mukherjee P."/>
            <person name="Basu J."/>
            <person name="Kundu M."/>
        </authorList>
    </citation>
    <scope>INTERACTION WITH RSEA</scope>
    <source>
        <strain>ATCC 700084 / mc(2)155</strain>
    </source>
</reference>
<keyword id="KW-0238">DNA-binding</keyword>
<keyword id="KW-1185">Reference proteome</keyword>
<keyword id="KW-0731">Sigma factor</keyword>
<keyword id="KW-0804">Transcription</keyword>
<keyword id="KW-0805">Transcription regulation</keyword>
<protein>
    <recommendedName>
        <fullName>ECF RNA polymerase sigma factor SigE</fullName>
        <shortName>ECF sigma factor SigE</shortName>
    </recommendedName>
    <alternativeName>
        <fullName>Alternative RNA polymerase sigma factor SigE</fullName>
    </alternativeName>
    <alternativeName>
        <fullName>RNA polymerase sigma-E factor</fullName>
        <shortName>Sigma-E factor</shortName>
    </alternativeName>
</protein>
<sequence>MEHDDRRASQVRAGNNRVVIRVEQIENNAVHEQEGSTTIASQPVTATHAAPVSMAHLEQFTDSDWVEPSDEPTGTAVFDATGDQAAMPSWDELVRQHADRVYRLAYRLSGNQHDAEDLTQETFIRVFRSVQNYQPGTFEGWLHRITTNLFLDMVRRRGRIRMEALPEDYDRVPAEDPNPEQIYHDSRLGADLQAALDSLPPEFRAAVVLCDIEGLSYEEIGATLGVKLGTVRSRIHRGRQQLRDYLAKHSSETAQSA</sequence>
<name>SIGE_MYCS2</name>